<accession>B2FQ70</accession>
<name>DAPB_STRMK</name>
<reference key="1">
    <citation type="journal article" date="2008" name="Genome Biol.">
        <title>The complete genome, comparative and functional analysis of Stenotrophomonas maltophilia reveals an organism heavily shielded by drug resistance determinants.</title>
        <authorList>
            <person name="Crossman L.C."/>
            <person name="Gould V.C."/>
            <person name="Dow J.M."/>
            <person name="Vernikos G.S."/>
            <person name="Okazaki A."/>
            <person name="Sebaihia M."/>
            <person name="Saunders D."/>
            <person name="Arrowsmith C."/>
            <person name="Carver T."/>
            <person name="Peters N."/>
            <person name="Adlem E."/>
            <person name="Kerhornou A."/>
            <person name="Lord A."/>
            <person name="Murphy L."/>
            <person name="Seeger K."/>
            <person name="Squares R."/>
            <person name="Rutter S."/>
            <person name="Quail M.A."/>
            <person name="Rajandream M.A."/>
            <person name="Harris D."/>
            <person name="Churcher C."/>
            <person name="Bentley S.D."/>
            <person name="Parkhill J."/>
            <person name="Thomson N.R."/>
            <person name="Avison M.B."/>
        </authorList>
    </citation>
    <scope>NUCLEOTIDE SEQUENCE [LARGE SCALE GENOMIC DNA]</scope>
    <source>
        <strain>K279a</strain>
    </source>
</reference>
<proteinExistence type="inferred from homology"/>
<protein>
    <recommendedName>
        <fullName evidence="1">4-hydroxy-tetrahydrodipicolinate reductase</fullName>
        <shortName evidence="1">HTPA reductase</shortName>
        <ecNumber evidence="1">1.17.1.8</ecNumber>
    </recommendedName>
</protein>
<sequence>MNQTPLRLLIHGASGRMGQALLRLAAEHPETLQIAAAVTGRAPAQRVVDGVPFFAASELPGAPAFDVAIDFSLPEGFDPMLALCVERGAGLVSGTTGISSTQRQALEAAAARIPLVWASNFSLGVAVLDELVERAAQALAGWDCDIVESHHTQKKDAPSGTALTLGAAAQRGGAEPHYASLRAGDIVGEHLVQFTGLGERIELVHRATNRDIFARGALFAARQLQGRAPGSYRVRDLLQ</sequence>
<feature type="chain" id="PRO_1000094011" description="4-hydroxy-tetrahydrodipicolinate reductase">
    <location>
        <begin position="1"/>
        <end position="239"/>
    </location>
</feature>
<feature type="active site" description="Proton donor/acceptor" evidence="1">
    <location>
        <position position="150"/>
    </location>
</feature>
<feature type="active site" description="Proton donor" evidence="1">
    <location>
        <position position="154"/>
    </location>
</feature>
<feature type="binding site" evidence="1">
    <location>
        <begin position="12"/>
        <end position="17"/>
    </location>
    <ligand>
        <name>NAD(+)</name>
        <dbReference type="ChEBI" id="CHEBI:57540"/>
    </ligand>
</feature>
<feature type="binding site" evidence="1">
    <location>
        <begin position="94"/>
        <end position="96"/>
    </location>
    <ligand>
        <name>NAD(+)</name>
        <dbReference type="ChEBI" id="CHEBI:57540"/>
    </ligand>
</feature>
<feature type="binding site" evidence="1">
    <location>
        <begin position="118"/>
        <end position="121"/>
    </location>
    <ligand>
        <name>NAD(+)</name>
        <dbReference type="ChEBI" id="CHEBI:57540"/>
    </ligand>
</feature>
<feature type="binding site" evidence="1">
    <location>
        <position position="151"/>
    </location>
    <ligand>
        <name>(S)-2,3,4,5-tetrahydrodipicolinate</name>
        <dbReference type="ChEBI" id="CHEBI:16845"/>
    </ligand>
</feature>
<feature type="binding site" evidence="1">
    <location>
        <begin position="160"/>
        <end position="161"/>
    </location>
    <ligand>
        <name>(S)-2,3,4,5-tetrahydrodipicolinate</name>
        <dbReference type="ChEBI" id="CHEBI:16845"/>
    </ligand>
</feature>
<evidence type="ECO:0000255" key="1">
    <source>
        <dbReference type="HAMAP-Rule" id="MF_00102"/>
    </source>
</evidence>
<evidence type="ECO:0000305" key="2"/>
<comment type="function">
    <text evidence="1">Catalyzes the conversion of 4-hydroxy-tetrahydrodipicolinate (HTPA) to tetrahydrodipicolinate.</text>
</comment>
<comment type="catalytic activity">
    <reaction evidence="1">
        <text>(S)-2,3,4,5-tetrahydrodipicolinate + NAD(+) + H2O = (2S,4S)-4-hydroxy-2,3,4,5-tetrahydrodipicolinate + NADH + H(+)</text>
        <dbReference type="Rhea" id="RHEA:35323"/>
        <dbReference type="ChEBI" id="CHEBI:15377"/>
        <dbReference type="ChEBI" id="CHEBI:15378"/>
        <dbReference type="ChEBI" id="CHEBI:16845"/>
        <dbReference type="ChEBI" id="CHEBI:57540"/>
        <dbReference type="ChEBI" id="CHEBI:57945"/>
        <dbReference type="ChEBI" id="CHEBI:67139"/>
        <dbReference type="EC" id="1.17.1.8"/>
    </reaction>
</comment>
<comment type="catalytic activity">
    <reaction evidence="1">
        <text>(S)-2,3,4,5-tetrahydrodipicolinate + NADP(+) + H2O = (2S,4S)-4-hydroxy-2,3,4,5-tetrahydrodipicolinate + NADPH + H(+)</text>
        <dbReference type="Rhea" id="RHEA:35331"/>
        <dbReference type="ChEBI" id="CHEBI:15377"/>
        <dbReference type="ChEBI" id="CHEBI:15378"/>
        <dbReference type="ChEBI" id="CHEBI:16845"/>
        <dbReference type="ChEBI" id="CHEBI:57783"/>
        <dbReference type="ChEBI" id="CHEBI:58349"/>
        <dbReference type="ChEBI" id="CHEBI:67139"/>
        <dbReference type="EC" id="1.17.1.8"/>
    </reaction>
</comment>
<comment type="pathway">
    <text evidence="1">Amino-acid biosynthesis; L-lysine biosynthesis via DAP pathway; (S)-tetrahydrodipicolinate from L-aspartate: step 4/4.</text>
</comment>
<comment type="subcellular location">
    <subcellularLocation>
        <location evidence="1">Cytoplasm</location>
    </subcellularLocation>
</comment>
<comment type="similarity">
    <text evidence="1">Belongs to the DapB family.</text>
</comment>
<comment type="caution">
    <text evidence="2">Was originally thought to be a dihydrodipicolinate reductase (DHDPR), catalyzing the conversion of dihydrodipicolinate to tetrahydrodipicolinate. However, it was shown in E.coli that the substrate of the enzymatic reaction is not dihydrodipicolinate (DHDP) but in fact (2S,4S)-4-hydroxy-2,3,4,5-tetrahydrodipicolinic acid (HTPA), the product released by the DapA-catalyzed reaction.</text>
</comment>
<keyword id="KW-0028">Amino-acid biosynthesis</keyword>
<keyword id="KW-0963">Cytoplasm</keyword>
<keyword id="KW-0220">Diaminopimelate biosynthesis</keyword>
<keyword id="KW-0457">Lysine biosynthesis</keyword>
<keyword id="KW-0520">NAD</keyword>
<keyword id="KW-0521">NADP</keyword>
<keyword id="KW-0560">Oxidoreductase</keyword>
<keyword id="KW-1185">Reference proteome</keyword>
<gene>
    <name evidence="1" type="primary">dapB</name>
    <name type="ordered locus">Smlt2217</name>
</gene>
<organism>
    <name type="scientific">Stenotrophomonas maltophilia (strain K279a)</name>
    <dbReference type="NCBI Taxonomy" id="522373"/>
    <lineage>
        <taxon>Bacteria</taxon>
        <taxon>Pseudomonadati</taxon>
        <taxon>Pseudomonadota</taxon>
        <taxon>Gammaproteobacteria</taxon>
        <taxon>Lysobacterales</taxon>
        <taxon>Lysobacteraceae</taxon>
        <taxon>Stenotrophomonas</taxon>
        <taxon>Stenotrophomonas maltophilia group</taxon>
    </lineage>
</organism>
<dbReference type="EC" id="1.17.1.8" evidence="1"/>
<dbReference type="EMBL" id="AM743169">
    <property type="protein sequence ID" value="CAQ45715.1"/>
    <property type="molecule type" value="Genomic_DNA"/>
</dbReference>
<dbReference type="SMR" id="B2FQ70"/>
<dbReference type="EnsemblBacteria" id="CAQ45715">
    <property type="protein sequence ID" value="CAQ45715"/>
    <property type="gene ID" value="Smlt2217"/>
</dbReference>
<dbReference type="KEGG" id="sml:Smlt2217"/>
<dbReference type="eggNOG" id="COG0289">
    <property type="taxonomic scope" value="Bacteria"/>
</dbReference>
<dbReference type="HOGENOM" id="CLU_047479_2_1_6"/>
<dbReference type="UniPathway" id="UPA00034">
    <property type="reaction ID" value="UER00018"/>
</dbReference>
<dbReference type="Proteomes" id="UP000008840">
    <property type="component" value="Chromosome"/>
</dbReference>
<dbReference type="GO" id="GO:0005829">
    <property type="term" value="C:cytosol"/>
    <property type="evidence" value="ECO:0007669"/>
    <property type="project" value="TreeGrafter"/>
</dbReference>
<dbReference type="GO" id="GO:0008839">
    <property type="term" value="F:4-hydroxy-tetrahydrodipicolinate reductase"/>
    <property type="evidence" value="ECO:0007669"/>
    <property type="project" value="UniProtKB-EC"/>
</dbReference>
<dbReference type="GO" id="GO:0051287">
    <property type="term" value="F:NAD binding"/>
    <property type="evidence" value="ECO:0007669"/>
    <property type="project" value="UniProtKB-UniRule"/>
</dbReference>
<dbReference type="GO" id="GO:0050661">
    <property type="term" value="F:NADP binding"/>
    <property type="evidence" value="ECO:0007669"/>
    <property type="project" value="UniProtKB-UniRule"/>
</dbReference>
<dbReference type="GO" id="GO:0016726">
    <property type="term" value="F:oxidoreductase activity, acting on CH or CH2 groups, NAD or NADP as acceptor"/>
    <property type="evidence" value="ECO:0007669"/>
    <property type="project" value="UniProtKB-UniRule"/>
</dbReference>
<dbReference type="GO" id="GO:0019877">
    <property type="term" value="P:diaminopimelate biosynthetic process"/>
    <property type="evidence" value="ECO:0007669"/>
    <property type="project" value="UniProtKB-UniRule"/>
</dbReference>
<dbReference type="GO" id="GO:0009089">
    <property type="term" value="P:lysine biosynthetic process via diaminopimelate"/>
    <property type="evidence" value="ECO:0007669"/>
    <property type="project" value="UniProtKB-UniRule"/>
</dbReference>
<dbReference type="CDD" id="cd02274">
    <property type="entry name" value="DHDPR_N"/>
    <property type="match status" value="1"/>
</dbReference>
<dbReference type="Gene3D" id="3.30.360.10">
    <property type="entry name" value="Dihydrodipicolinate Reductase, domain 2"/>
    <property type="match status" value="1"/>
</dbReference>
<dbReference type="Gene3D" id="3.40.50.720">
    <property type="entry name" value="NAD(P)-binding Rossmann-like Domain"/>
    <property type="match status" value="1"/>
</dbReference>
<dbReference type="HAMAP" id="MF_00102">
    <property type="entry name" value="DapB"/>
    <property type="match status" value="1"/>
</dbReference>
<dbReference type="InterPro" id="IPR022663">
    <property type="entry name" value="DapB_C"/>
</dbReference>
<dbReference type="InterPro" id="IPR000846">
    <property type="entry name" value="DapB_N"/>
</dbReference>
<dbReference type="InterPro" id="IPR022664">
    <property type="entry name" value="DapB_N_CS"/>
</dbReference>
<dbReference type="InterPro" id="IPR023940">
    <property type="entry name" value="DHDPR_bac"/>
</dbReference>
<dbReference type="InterPro" id="IPR036291">
    <property type="entry name" value="NAD(P)-bd_dom_sf"/>
</dbReference>
<dbReference type="NCBIfam" id="TIGR00036">
    <property type="entry name" value="dapB"/>
    <property type="match status" value="1"/>
</dbReference>
<dbReference type="PANTHER" id="PTHR20836:SF0">
    <property type="entry name" value="4-HYDROXY-TETRAHYDRODIPICOLINATE REDUCTASE 1, CHLOROPLASTIC-RELATED"/>
    <property type="match status" value="1"/>
</dbReference>
<dbReference type="PANTHER" id="PTHR20836">
    <property type="entry name" value="DIHYDRODIPICOLINATE REDUCTASE"/>
    <property type="match status" value="1"/>
</dbReference>
<dbReference type="Pfam" id="PF05173">
    <property type="entry name" value="DapB_C"/>
    <property type="match status" value="1"/>
</dbReference>
<dbReference type="Pfam" id="PF01113">
    <property type="entry name" value="DapB_N"/>
    <property type="match status" value="1"/>
</dbReference>
<dbReference type="PIRSF" id="PIRSF000161">
    <property type="entry name" value="DHPR"/>
    <property type="match status" value="1"/>
</dbReference>
<dbReference type="SUPFAM" id="SSF55347">
    <property type="entry name" value="Glyceraldehyde-3-phosphate dehydrogenase-like, C-terminal domain"/>
    <property type="match status" value="1"/>
</dbReference>
<dbReference type="SUPFAM" id="SSF51735">
    <property type="entry name" value="NAD(P)-binding Rossmann-fold domains"/>
    <property type="match status" value="1"/>
</dbReference>
<dbReference type="PROSITE" id="PS01298">
    <property type="entry name" value="DAPB"/>
    <property type="match status" value="1"/>
</dbReference>